<proteinExistence type="inferred from homology"/>
<accession>C3PP84</accession>
<feature type="chain" id="PRO_1000214372" description="Small ribosomal subunit protein uS11">
    <location>
        <begin position="1"/>
        <end position="127"/>
    </location>
</feature>
<dbReference type="EMBL" id="CP001612">
    <property type="protein sequence ID" value="ACP53744.1"/>
    <property type="molecule type" value="Genomic_DNA"/>
</dbReference>
<dbReference type="RefSeq" id="WP_004997839.1">
    <property type="nucleotide sequence ID" value="NC_012633.1"/>
</dbReference>
<dbReference type="SMR" id="C3PP84"/>
<dbReference type="GeneID" id="95361463"/>
<dbReference type="KEGG" id="raf:RAF_ORF0889"/>
<dbReference type="HOGENOM" id="CLU_072439_5_0_5"/>
<dbReference type="Proteomes" id="UP000002305">
    <property type="component" value="Chromosome"/>
</dbReference>
<dbReference type="GO" id="GO:1990904">
    <property type="term" value="C:ribonucleoprotein complex"/>
    <property type="evidence" value="ECO:0007669"/>
    <property type="project" value="UniProtKB-KW"/>
</dbReference>
<dbReference type="GO" id="GO:0005840">
    <property type="term" value="C:ribosome"/>
    <property type="evidence" value="ECO:0007669"/>
    <property type="project" value="UniProtKB-KW"/>
</dbReference>
<dbReference type="GO" id="GO:0019843">
    <property type="term" value="F:rRNA binding"/>
    <property type="evidence" value="ECO:0007669"/>
    <property type="project" value="UniProtKB-UniRule"/>
</dbReference>
<dbReference type="GO" id="GO:0003735">
    <property type="term" value="F:structural constituent of ribosome"/>
    <property type="evidence" value="ECO:0007669"/>
    <property type="project" value="InterPro"/>
</dbReference>
<dbReference type="GO" id="GO:0006412">
    <property type="term" value="P:translation"/>
    <property type="evidence" value="ECO:0007669"/>
    <property type="project" value="UniProtKB-UniRule"/>
</dbReference>
<dbReference type="Gene3D" id="3.30.420.80">
    <property type="entry name" value="Ribosomal protein S11"/>
    <property type="match status" value="1"/>
</dbReference>
<dbReference type="HAMAP" id="MF_01310">
    <property type="entry name" value="Ribosomal_uS11"/>
    <property type="match status" value="1"/>
</dbReference>
<dbReference type="InterPro" id="IPR001971">
    <property type="entry name" value="Ribosomal_uS11"/>
</dbReference>
<dbReference type="InterPro" id="IPR019981">
    <property type="entry name" value="Ribosomal_uS11_bac-type"/>
</dbReference>
<dbReference type="InterPro" id="IPR018102">
    <property type="entry name" value="Ribosomal_uS11_CS"/>
</dbReference>
<dbReference type="InterPro" id="IPR036967">
    <property type="entry name" value="Ribosomal_uS11_sf"/>
</dbReference>
<dbReference type="NCBIfam" id="NF003698">
    <property type="entry name" value="PRK05309.1"/>
    <property type="match status" value="1"/>
</dbReference>
<dbReference type="NCBIfam" id="TIGR03632">
    <property type="entry name" value="uS11_bact"/>
    <property type="match status" value="1"/>
</dbReference>
<dbReference type="PANTHER" id="PTHR11759">
    <property type="entry name" value="40S RIBOSOMAL PROTEIN S14/30S RIBOSOMAL PROTEIN S11"/>
    <property type="match status" value="1"/>
</dbReference>
<dbReference type="Pfam" id="PF00411">
    <property type="entry name" value="Ribosomal_S11"/>
    <property type="match status" value="1"/>
</dbReference>
<dbReference type="PIRSF" id="PIRSF002131">
    <property type="entry name" value="Ribosomal_S11"/>
    <property type="match status" value="1"/>
</dbReference>
<dbReference type="SUPFAM" id="SSF53137">
    <property type="entry name" value="Translational machinery components"/>
    <property type="match status" value="1"/>
</dbReference>
<dbReference type="PROSITE" id="PS00054">
    <property type="entry name" value="RIBOSOMAL_S11"/>
    <property type="match status" value="1"/>
</dbReference>
<gene>
    <name evidence="1" type="primary">rpsK</name>
    <name type="ordered locus">RAF_ORF0889</name>
</gene>
<organism>
    <name type="scientific">Rickettsia africae (strain ESF-5)</name>
    <dbReference type="NCBI Taxonomy" id="347255"/>
    <lineage>
        <taxon>Bacteria</taxon>
        <taxon>Pseudomonadati</taxon>
        <taxon>Pseudomonadota</taxon>
        <taxon>Alphaproteobacteria</taxon>
        <taxon>Rickettsiales</taxon>
        <taxon>Rickettsiaceae</taxon>
        <taxon>Rickettsieae</taxon>
        <taxon>Rickettsia</taxon>
        <taxon>spotted fever group</taxon>
    </lineage>
</organism>
<keyword id="KW-0687">Ribonucleoprotein</keyword>
<keyword id="KW-0689">Ribosomal protein</keyword>
<keyword id="KW-0694">RNA-binding</keyword>
<keyword id="KW-0699">rRNA-binding</keyword>
<reference key="1">
    <citation type="journal article" date="2009" name="BMC Genomics">
        <title>Analysis of the Rickettsia africae genome reveals that virulence acquisition in Rickettsia species may be explained by genome reduction.</title>
        <authorList>
            <person name="Fournier P.-E."/>
            <person name="El Karkouri K."/>
            <person name="Leroy Q."/>
            <person name="Robert C."/>
            <person name="Giumelli B."/>
            <person name="Renesto P."/>
            <person name="Socolovschi C."/>
            <person name="Parola P."/>
            <person name="Audic S."/>
            <person name="Raoult D."/>
        </authorList>
    </citation>
    <scope>NUCLEOTIDE SEQUENCE [LARGE SCALE GENOMIC DNA]</scope>
    <source>
        <strain>ESF-5</strain>
    </source>
</reference>
<evidence type="ECO:0000255" key="1">
    <source>
        <dbReference type="HAMAP-Rule" id="MF_01310"/>
    </source>
</evidence>
<evidence type="ECO:0000305" key="2"/>
<comment type="function">
    <text evidence="1">Located on the platform of the 30S subunit, it bridges several disparate RNA helices of the 16S rRNA. Forms part of the Shine-Dalgarno cleft in the 70S ribosome.</text>
</comment>
<comment type="subunit">
    <text evidence="1">Part of the 30S ribosomal subunit. Interacts with proteins S7 and S18. Binds to IF-3.</text>
</comment>
<comment type="similarity">
    <text evidence="1">Belongs to the universal ribosomal protein uS11 family.</text>
</comment>
<protein>
    <recommendedName>
        <fullName evidence="1">Small ribosomal subunit protein uS11</fullName>
    </recommendedName>
    <alternativeName>
        <fullName evidence="2">30S ribosomal protein S11</fullName>
    </alternativeName>
</protein>
<sequence length="127" mass="13641">MNQTVKVKKKKKTITLGVVHIRASFNNTIVTFTDIQGNTIASASAGGNGFKGARKATPYAAQVTIDRASEKAKEYGLKTISIRIGGPGAQRESAMRALFGQNFVVTSILDVSSIAHNGVRPPKRRRV</sequence>
<name>RS11_RICAE</name>